<reference evidence="3" key="1">
    <citation type="journal article" date="2019" name="Prep. Biochem. Biotechnol.">
        <title>Production of highly active fungal milk-clotting enzyme by solid-state fermentation.</title>
        <authorList>
            <person name="Chinmayee C.V."/>
            <person name="Vidya C."/>
            <person name="Rani A."/>
            <person name="Singh S.A."/>
        </authorList>
    </citation>
    <scope>PROTEIN SEQUENCE</scope>
    <scope>CATALYTIC ACTIVITY</scope>
    <scope>BIOPHYSICOCHEMICAL PROPERTIES</scope>
    <scope>BIOTECHNOLOGY</scope>
</reference>
<dbReference type="EC" id="3.4.23.21" evidence="1"/>
<dbReference type="GO" id="GO:0004190">
    <property type="term" value="F:aspartic-type endopeptidase activity"/>
    <property type="evidence" value="ECO:0000314"/>
    <property type="project" value="UniProtKB"/>
</dbReference>
<dbReference type="GO" id="GO:0006508">
    <property type="term" value="P:proteolysis"/>
    <property type="evidence" value="ECO:0000314"/>
    <property type="project" value="UniProtKB"/>
</dbReference>
<name>CARP_RHIAZ</name>
<evidence type="ECO:0000269" key="1">
    <source>
    </source>
</evidence>
<evidence type="ECO:0000303" key="2">
    <source>
    </source>
</evidence>
<evidence type="ECO:0000305" key="3"/>
<sequence length="7" mass="600">AGVGTVP</sequence>
<organism evidence="2">
    <name type="scientific">Rhizopus azygosporus</name>
    <name type="common">Rhizopus microsporus var. azygosporus</name>
    <dbReference type="NCBI Taxonomy" id="86630"/>
    <lineage>
        <taxon>Eukaryota</taxon>
        <taxon>Fungi</taxon>
        <taxon>Fungi incertae sedis</taxon>
        <taxon>Mucoromycota</taxon>
        <taxon>Mucoromycotina</taxon>
        <taxon>Mucoromycetes</taxon>
        <taxon>Mucorales</taxon>
        <taxon>Mucorineae</taxon>
        <taxon>Rhizopodaceae</taxon>
        <taxon>Rhizopus</taxon>
    </lineage>
</organism>
<protein>
    <recommendedName>
        <fullName evidence="3">Rhizopuspepsin</fullName>
        <ecNumber evidence="1">3.4.23.21</ecNumber>
    </recommendedName>
</protein>
<comment type="catalytic activity">
    <reaction evidence="1">
        <text>Hydrolysis of proteins with broad specificity similar to that of pepsin A, preferring hydrophobic residues at P1 and P1'. Clots milk and activates trypsinogen. Does not cleave 4-Gln-|-His-5, but does cleave 10-His-|-Leu-11 and 12-Val-|-Glu-13 in B chain of insulin.</text>
        <dbReference type="EC" id="3.4.23.21"/>
    </reaction>
</comment>
<comment type="biophysicochemical properties">
    <phDependence>
        <text evidence="1">Optimum pH is 7 with hemoglobin as substrate.</text>
    </phDependence>
    <temperatureDependence>
        <text evidence="1">Optimum temperature is between 45-50 degrees Celsius with hemoglobin as substrate. Loses 50% of its activity at 60 degrees Celsius.</text>
    </temperatureDependence>
</comment>
<comment type="biotechnology">
    <text evidence="1">This enzyme is capable of clotting milk and thus can be used for cheese production.</text>
</comment>
<comment type="similarity">
    <text evidence="3">Belongs to the peptidase A1 family.</text>
</comment>
<keyword id="KW-0064">Aspartyl protease</keyword>
<keyword id="KW-0903">Direct protein sequencing</keyword>
<keyword id="KW-0378">Hydrolase</keyword>
<keyword id="KW-0645">Protease</keyword>
<feature type="chain" id="PRO_0000451149" description="Rhizopuspepsin">
    <location>
        <begin position="1" status="less than"/>
        <end position="7" status="greater than"/>
    </location>
</feature>
<feature type="non-terminal residue" evidence="2">
    <location>
        <position position="1"/>
    </location>
</feature>
<feature type="non-terminal residue" evidence="2">
    <location>
        <position position="7"/>
    </location>
</feature>
<accession>C0HLM4</accession>
<proteinExistence type="evidence at protein level"/>